<name>KCNH3_MOUSE</name>
<comment type="function">
    <text evidence="6 7 8">Pore-forming (alpha) subunit of a voltage-gated inwardly rectifying potassium channel (PubMed:10191308, PubMed:19623261, PubMed:19808681). Charactherized by a fast rate of activation during depolarization followed by a rapid inactivation at much more depolarized value causing inward rectification due to a C-type inactivation mechanism (PubMed:10191308, PubMed:19623261). Exhibits a rapid recovery from inactivation (PubMed:10191308).</text>
</comment>
<comment type="catalytic activity">
    <reaction evidence="6 7 8">
        <text>K(+)(in) = K(+)(out)</text>
        <dbReference type="Rhea" id="RHEA:29463"/>
        <dbReference type="ChEBI" id="CHEBI:29103"/>
    </reaction>
</comment>
<comment type="subunit">
    <text evidence="7 11">The potassium channel is probably composed of a homo- or heterotetrameric complex of pore-forming alpha subunits that can associate with modulating beta subunits (Probable). Interacts with KCNE1 and KCNE3; these interactions regulate KCNH3 trafficking to the plasma membrane and its subsequent voltage-gated potassium channel activity (PubMed:19623261).</text>
</comment>
<comment type="subcellular location">
    <subcellularLocation>
        <location evidence="7">Cell membrane</location>
        <topology>Multi-pass membrane protein</topology>
    </subcellularLocation>
    <text evidence="8">Expression on the cell membrane requires at least one of the three glycosylation sites to carry a sugar chain irrespective of their positions.</text>
</comment>
<comment type="tissue specificity">
    <text evidence="6">Detected in brain, but not in other tissues.</text>
</comment>
<comment type="PTM">
    <text evidence="8">N-glycosylated (PubMed:19808681). N-glycosylation mediates traffick to the cell membrane but is not necessary for voltage-gated potassium channel activity (PubMed:19808681).</text>
</comment>
<comment type="similarity">
    <text evidence="11">Belongs to the potassium channel family. H (Eag) (TC 1.A.1.20) subfamily. Kv12.2/KCNH3 sub-subfamily.</text>
</comment>
<reference key="1">
    <citation type="journal article" date="1999" name="J. Neurosci.">
        <title>Functional analysis of a mouse brain Elk-type K+ channel.</title>
        <authorList>
            <person name="Trudeau M.C."/>
            <person name="Titus S.A."/>
            <person name="Branchaw J.L."/>
            <person name="Ganetzky B."/>
            <person name="Robertson G.A."/>
        </authorList>
    </citation>
    <scope>NUCLEOTIDE SEQUENCE [MRNA]</scope>
    <scope>FUNCTION</scope>
    <scope>TRANSPORTER ACTIVITY</scope>
    <scope>TISSUE SPECIFICITY</scope>
    <source>
        <tissue>Brain</tissue>
    </source>
</reference>
<reference key="2">
    <citation type="submission" date="2003-09" db="EMBL/GenBank/DDBJ databases">
        <title>Coding sequence of the mouse potassium channel Kcnh3.</title>
        <authorList>
            <person name="Jegla T."/>
            <person name="Lee V."/>
            <person name="Huynh T."/>
        </authorList>
    </citation>
    <scope>NUCLEOTIDE SEQUENCE [MRNA]</scope>
    <source>
        <strain>C57BL/6J</strain>
    </source>
</reference>
<reference key="3">
    <citation type="journal article" date="2009" name="PLoS Biol.">
        <title>Lineage-specific biology revealed by a finished genome assembly of the mouse.</title>
        <authorList>
            <person name="Church D.M."/>
            <person name="Goodstadt L."/>
            <person name="Hillier L.W."/>
            <person name="Zody M.C."/>
            <person name="Goldstein S."/>
            <person name="She X."/>
            <person name="Bult C.J."/>
            <person name="Agarwala R."/>
            <person name="Cherry J.L."/>
            <person name="DiCuccio M."/>
            <person name="Hlavina W."/>
            <person name="Kapustin Y."/>
            <person name="Meric P."/>
            <person name="Maglott D."/>
            <person name="Birtle Z."/>
            <person name="Marques A.C."/>
            <person name="Graves T."/>
            <person name="Zhou S."/>
            <person name="Teague B."/>
            <person name="Potamousis K."/>
            <person name="Churas C."/>
            <person name="Place M."/>
            <person name="Herschleb J."/>
            <person name="Runnheim R."/>
            <person name="Forrest D."/>
            <person name="Amos-Landgraf J."/>
            <person name="Schwartz D.C."/>
            <person name="Cheng Z."/>
            <person name="Lindblad-Toh K."/>
            <person name="Eichler E.E."/>
            <person name="Ponting C.P."/>
        </authorList>
    </citation>
    <scope>NUCLEOTIDE SEQUENCE [LARGE SCALE GENOMIC DNA]</scope>
    <source>
        <strain>C57BL/6J</strain>
    </source>
</reference>
<reference key="4">
    <citation type="submission" date="2005-09" db="EMBL/GenBank/DDBJ databases">
        <authorList>
            <person name="Mural R.J."/>
            <person name="Adams M.D."/>
            <person name="Myers E.W."/>
            <person name="Smith H.O."/>
            <person name="Venter J.C."/>
        </authorList>
    </citation>
    <scope>NUCLEOTIDE SEQUENCE [LARGE SCALE GENOMIC DNA]</scope>
</reference>
<reference key="5">
    <citation type="journal article" date="2004" name="Genome Res.">
        <title>The status, quality, and expansion of the NIH full-length cDNA project: the Mammalian Gene Collection (MGC).</title>
        <authorList>
            <consortium name="The MGC Project Team"/>
        </authorList>
    </citation>
    <scope>NUCLEOTIDE SEQUENCE [LARGE SCALE MRNA]</scope>
    <source>
        <tissue>Brain</tissue>
    </source>
</reference>
<reference key="6">
    <citation type="journal article" date="2009" name="J. Biol. Chem.">
        <title>Triple N-glycosylation in the long S5-P loop regulates the activation and trafficking of the Kv12.2 potassium channel.</title>
        <authorList>
            <person name="Noma K."/>
            <person name="Kimura K."/>
            <person name="Minatohara K."/>
            <person name="Nakashima H."/>
            <person name="Nagao Y."/>
            <person name="Mizoguchi A."/>
            <person name="Fujiyoshi Y."/>
        </authorList>
    </citation>
    <scope>FUNCTION</scope>
    <scope>TRANSPORTER ACTIVITY</scope>
    <scope>SUBCELLULAR LOCATION</scope>
    <scope>GLYCOSYLATION AT ASN-421; ASN-428 AND ASN-447</scope>
    <scope>MUTAGENESIS OF ASN-421; ASN-428 AND ASN-447</scope>
</reference>
<reference key="7">
    <citation type="journal article" date="2009" name="PLoS ONE">
        <title>KCNE1 and KCNE3 beta-subunits regulate membrane surface expression of Kv12.2 K(+) channels in vitro and form a tripartite complex in vivo.</title>
        <authorList>
            <person name="Clancy S.M."/>
            <person name="Chen B."/>
            <person name="Bertaso F."/>
            <person name="Mamet J."/>
            <person name="Jegla T."/>
        </authorList>
    </citation>
    <scope>INTERACTION WITH KCNE1 AND KCNE3</scope>
    <scope>FUNCTION</scope>
    <scope>TRANSPORTER ACTIVITY</scope>
    <scope>SUBCELLULAR LOCATION</scope>
</reference>
<accession>Q9WVJ0</accession>
<accession>B2RU85</accession>
<accession>E9QMZ8</accession>
<accession>Q6U1M1</accession>
<feature type="chain" id="PRO_0000054006" description="Voltage-gated inwardly rectifying potassium channel KCNH3">
    <location>
        <begin position="1"/>
        <end position="1095"/>
    </location>
</feature>
<feature type="topological domain" description="Cytoplasmic" evidence="2">
    <location>
        <begin position="1"/>
        <end position="228"/>
    </location>
</feature>
<feature type="transmembrane region" description="Helical; Name=Segment S1" evidence="2">
    <location>
        <begin position="229"/>
        <end position="249"/>
    </location>
</feature>
<feature type="topological domain" description="Extracellular" evidence="2">
    <location>
        <begin position="250"/>
        <end position="259"/>
    </location>
</feature>
<feature type="transmembrane region" description="Helical; Name=Segment S2" evidence="2">
    <location>
        <begin position="260"/>
        <end position="280"/>
    </location>
</feature>
<feature type="topological domain" description="Cytoplasmic" evidence="2">
    <location>
        <begin position="281"/>
        <end position="302"/>
    </location>
</feature>
<feature type="transmembrane region" description="Helical; Name=Segment S3" evidence="2">
    <location>
        <begin position="303"/>
        <end position="323"/>
    </location>
</feature>
<feature type="topological domain" description="Extracellular" evidence="2">
    <location>
        <begin position="324"/>
        <end position="331"/>
    </location>
</feature>
<feature type="transmembrane region" description="Helical; Voltage-sensor; Name=Segment S4" evidence="2">
    <location>
        <begin position="332"/>
        <end position="352"/>
    </location>
</feature>
<feature type="topological domain" description="Cytoplasmic" evidence="2">
    <location>
        <begin position="353"/>
        <end position="361"/>
    </location>
</feature>
<feature type="transmembrane region" description="Helical; Name=Segment S5" evidence="2">
    <location>
        <begin position="362"/>
        <end position="382"/>
    </location>
</feature>
<feature type="topological domain" description="Extracellular" evidence="2">
    <location>
        <begin position="383"/>
        <end position="464"/>
    </location>
</feature>
<feature type="intramembrane region" description="Pore-forming; Name=Segment H5" evidence="2">
    <location>
        <begin position="465"/>
        <end position="485"/>
    </location>
</feature>
<feature type="topological domain" description="Extracellular" evidence="2">
    <location>
        <begin position="486"/>
        <end position="490"/>
    </location>
</feature>
<feature type="transmembrane region" description="Helical; Name=Segment S6" evidence="2">
    <location>
        <begin position="491"/>
        <end position="511"/>
    </location>
</feature>
<feature type="topological domain" description="Cytoplasmic" evidence="2">
    <location>
        <begin position="512"/>
        <end position="1095"/>
    </location>
</feature>
<feature type="domain" description="PAS" evidence="3">
    <location>
        <begin position="18"/>
        <end position="90"/>
    </location>
</feature>
<feature type="domain" description="PAC" evidence="4">
    <location>
        <begin position="93"/>
        <end position="145"/>
    </location>
</feature>
<feature type="region of interest" description="Disordered" evidence="5">
    <location>
        <begin position="137"/>
        <end position="161"/>
    </location>
</feature>
<feature type="region of interest" description="Disordered" evidence="5">
    <location>
        <begin position="417"/>
        <end position="447"/>
    </location>
</feature>
<feature type="region of interest" description="Disordered" evidence="5">
    <location>
        <begin position="740"/>
        <end position="823"/>
    </location>
</feature>
<feature type="region of interest" description="Disordered" evidence="5">
    <location>
        <begin position="854"/>
        <end position="883"/>
    </location>
</feature>
<feature type="region of interest" description="Disordered" evidence="5">
    <location>
        <begin position="965"/>
        <end position="1069"/>
    </location>
</feature>
<feature type="short sequence motif" description="Selectivity filter" evidence="1">
    <location>
        <begin position="476"/>
        <end position="481"/>
    </location>
</feature>
<feature type="compositionally biased region" description="Basic and acidic residues" evidence="5">
    <location>
        <begin position="137"/>
        <end position="150"/>
    </location>
</feature>
<feature type="compositionally biased region" description="Low complexity" evidence="5">
    <location>
        <begin position="419"/>
        <end position="436"/>
    </location>
</feature>
<feature type="compositionally biased region" description="Basic residues" evidence="5">
    <location>
        <begin position="784"/>
        <end position="796"/>
    </location>
</feature>
<feature type="compositionally biased region" description="Low complexity" evidence="5">
    <location>
        <begin position="857"/>
        <end position="872"/>
    </location>
</feature>
<feature type="compositionally biased region" description="Pro residues" evidence="5">
    <location>
        <begin position="974"/>
        <end position="991"/>
    </location>
</feature>
<feature type="binding site">
    <location>
        <begin position="593"/>
        <end position="708"/>
    </location>
    <ligand>
        <name>a nucleoside 3',5'-cyclic phosphate</name>
        <dbReference type="ChEBI" id="CHEBI:58464"/>
    </ligand>
</feature>
<feature type="glycosylation site" description="N-linked (GlcNAc...) asparagine" evidence="8">
    <location>
        <position position="421"/>
    </location>
</feature>
<feature type="glycosylation site" description="N-linked (GlcNAc...) asparagine" evidence="8">
    <location>
        <position position="428"/>
    </location>
</feature>
<feature type="glycosylation site" description="N-linked (GlcNAc...) asparagine" evidence="8">
    <location>
        <position position="447"/>
    </location>
</feature>
<feature type="mutagenesis site" description="Impairs trafficking to the cell membrane; when associated with Q-428 and Q-447. Impairs N-glycosylation; when associated with Q-428 and Q-447." evidence="8">
    <original>N</original>
    <variation>Q</variation>
    <location>
        <position position="421"/>
    </location>
</feature>
<feature type="mutagenesis site" description="Impairs trafficking to the cell membrane; when associated with Q-421 and Q-447. Impairs N-glycosylation; when associated with Q-421 and Q-447." evidence="8">
    <original>N</original>
    <variation>Q</variation>
    <location>
        <position position="428"/>
    </location>
</feature>
<feature type="mutagenesis site" description="Impairs trafficking to the cell membrane; when associated with Q-421 and Q-428. Impairs N-glycosylation; when associated with Q-421 and Q-428." evidence="8">
    <original>N</original>
    <variation>Q</variation>
    <location>
        <position position="447"/>
    </location>
</feature>
<feature type="sequence conflict" description="In Ref. 1; AAD40578." evidence="11" ref="1">
    <original>R</original>
    <variation>P</variation>
    <location>
        <position position="5"/>
    </location>
</feature>
<feature type="sequence conflict" description="In Ref. 1; AAD40578." evidence="11" ref="1">
    <original>S</original>
    <variation>N</variation>
    <location>
        <position position="388"/>
    </location>
</feature>
<feature type="sequence conflict" description="In Ref. 1; AAD40578." evidence="11" ref="1">
    <original>SSSSGSGGGR</original>
    <variation>GG</variation>
    <location>
        <begin position="433"/>
        <end position="442"/>
    </location>
</feature>
<feature type="sequence conflict" description="In Ref. 2; AAQ90188." evidence="11" ref="2">
    <original>S</original>
    <variation>G</variation>
    <location>
        <position position="472"/>
    </location>
</feature>
<feature type="sequence conflict" description="In Ref. 2; AAQ90188." evidence="11" ref="2">
    <original>M</original>
    <variation>T</variation>
    <location>
        <position position="497"/>
    </location>
</feature>
<feature type="sequence conflict" description="In Ref. 2; AAQ90188." evidence="11" ref="2">
    <original>G</original>
    <variation>A</variation>
    <location>
        <position position="500"/>
    </location>
</feature>
<feature type="sequence conflict" description="In Ref. 1; AAD40578." evidence="11" ref="1">
    <original>V</original>
    <variation>I</variation>
    <location>
        <position position="752"/>
    </location>
</feature>
<feature type="sequence conflict" description="In Ref. 1; AAD40578." evidence="11" ref="1">
    <original>S</original>
    <variation>T</variation>
    <location>
        <position position="814"/>
    </location>
</feature>
<feature type="sequence conflict" description="In Ref. 1; AAD40578." evidence="11" ref="1">
    <original>S</original>
    <variation>G</variation>
    <location>
        <position position="844"/>
    </location>
</feature>
<feature type="sequence conflict" description="In Ref. 1; AAD40578." evidence="11" ref="1">
    <original>P</original>
    <variation>H</variation>
    <location>
        <position position="848"/>
    </location>
</feature>
<feature type="sequence conflict" description="In Ref. 1; AAD40578." evidence="11" ref="1">
    <original>G</original>
    <variation>V</variation>
    <location>
        <position position="879"/>
    </location>
</feature>
<feature type="sequence conflict" description="In Ref. 1; AAD40578." evidence="11" ref="1">
    <original>M</original>
    <variation>T</variation>
    <location>
        <position position="897"/>
    </location>
</feature>
<feature type="sequence conflict" description="In Ref. 1; AAD40578." evidence="11" ref="1">
    <original>G</original>
    <variation>V</variation>
    <location>
        <position position="932"/>
    </location>
</feature>
<feature type="sequence conflict" description="In Ref. 1; AAD40578." evidence="11" ref="1">
    <original>E</original>
    <variation>G</variation>
    <location>
        <position position="936"/>
    </location>
</feature>
<feature type="sequence conflict" description="In Ref. 1; AAD40578." evidence="11" ref="1">
    <original>S</original>
    <variation>C</variation>
    <location>
        <position position="943"/>
    </location>
</feature>
<feature type="sequence conflict" description="In Ref. 1; AAD40578." evidence="11" ref="1">
    <original>Q</original>
    <variation>H</variation>
    <location>
        <position position="979"/>
    </location>
</feature>
<feature type="sequence conflict" description="In Ref. 1; AAD40578." evidence="11" ref="1">
    <original>S</original>
    <variation>P</variation>
    <location>
        <position position="1033"/>
    </location>
</feature>
<feature type="sequence conflict" description="In Ref. 1; AAD40578." evidence="11" ref="1">
    <original>P</original>
    <variation>S</variation>
    <location>
        <position position="1060"/>
    </location>
</feature>
<feature type="sequence conflict" description="In Ref. 1; AAD40578." evidence="11" ref="1">
    <original>T</original>
    <variation>S</variation>
    <location>
        <position position="1084"/>
    </location>
</feature>
<evidence type="ECO:0000250" key="1"/>
<evidence type="ECO:0000255" key="2"/>
<evidence type="ECO:0000255" key="3">
    <source>
        <dbReference type="PROSITE-ProRule" id="PRU00140"/>
    </source>
</evidence>
<evidence type="ECO:0000255" key="4">
    <source>
        <dbReference type="PROSITE-ProRule" id="PRU00141"/>
    </source>
</evidence>
<evidence type="ECO:0000256" key="5">
    <source>
        <dbReference type="SAM" id="MobiDB-lite"/>
    </source>
</evidence>
<evidence type="ECO:0000269" key="6">
    <source>
    </source>
</evidence>
<evidence type="ECO:0000269" key="7">
    <source>
    </source>
</evidence>
<evidence type="ECO:0000269" key="8">
    <source>
    </source>
</evidence>
<evidence type="ECO:0000303" key="9">
    <source>
    </source>
</evidence>
<evidence type="ECO:0000303" key="10">
    <source ref="2"/>
</evidence>
<evidence type="ECO:0000305" key="11"/>
<evidence type="ECO:0000312" key="12">
    <source>
        <dbReference type="MGI" id="MGI:1341723"/>
    </source>
</evidence>
<gene>
    <name evidence="10 12" type="primary">Kcnh3</name>
    <name type="synonym">Elk2</name>
</gene>
<organism>
    <name type="scientific">Mus musculus</name>
    <name type="common">Mouse</name>
    <dbReference type="NCBI Taxonomy" id="10090"/>
    <lineage>
        <taxon>Eukaryota</taxon>
        <taxon>Metazoa</taxon>
        <taxon>Chordata</taxon>
        <taxon>Craniata</taxon>
        <taxon>Vertebrata</taxon>
        <taxon>Euteleostomi</taxon>
        <taxon>Mammalia</taxon>
        <taxon>Eutheria</taxon>
        <taxon>Euarchontoglires</taxon>
        <taxon>Glires</taxon>
        <taxon>Rodentia</taxon>
        <taxon>Myomorpha</taxon>
        <taxon>Muroidea</taxon>
        <taxon>Muridae</taxon>
        <taxon>Murinae</taxon>
        <taxon>Mus</taxon>
        <taxon>Mus</taxon>
    </lineage>
</organism>
<dbReference type="EMBL" id="AF109143">
    <property type="protein sequence ID" value="AAD40578.1"/>
    <property type="molecule type" value="mRNA"/>
</dbReference>
<dbReference type="EMBL" id="AY380579">
    <property type="protein sequence ID" value="AAQ90188.1"/>
    <property type="molecule type" value="mRNA"/>
</dbReference>
<dbReference type="EMBL" id="AC161198">
    <property type="status" value="NOT_ANNOTATED_CDS"/>
    <property type="molecule type" value="Genomic_DNA"/>
</dbReference>
<dbReference type="EMBL" id="CH466550">
    <property type="protein sequence ID" value="EDL04139.1"/>
    <property type="molecule type" value="Genomic_DNA"/>
</dbReference>
<dbReference type="EMBL" id="BC141013">
    <property type="protein sequence ID" value="AAI41014.1"/>
    <property type="molecule type" value="mRNA"/>
</dbReference>
<dbReference type="EMBL" id="BC145145">
    <property type="protein sequence ID" value="AAI45146.1"/>
    <property type="molecule type" value="mRNA"/>
</dbReference>
<dbReference type="CCDS" id="CCDS27817.1"/>
<dbReference type="RefSeq" id="NP_034731.3">
    <property type="nucleotide sequence ID" value="NM_010601.3"/>
</dbReference>
<dbReference type="SMR" id="Q9WVJ0"/>
<dbReference type="FunCoup" id="Q9WVJ0">
    <property type="interactions" value="33"/>
</dbReference>
<dbReference type="STRING" id="10090.ENSMUSP00000040548"/>
<dbReference type="GuidetoPHARMACOLOGY" id="576"/>
<dbReference type="GlyCosmos" id="Q9WVJ0">
    <property type="glycosylation" value="3 sites, No reported glycans"/>
</dbReference>
<dbReference type="GlyGen" id="Q9WVJ0">
    <property type="glycosylation" value="5 sites, 1 N-linked glycan (1 site)"/>
</dbReference>
<dbReference type="iPTMnet" id="Q9WVJ0"/>
<dbReference type="PhosphoSitePlus" id="Q9WVJ0"/>
<dbReference type="PaxDb" id="10090-ENSMUSP00000040548"/>
<dbReference type="ProteomicsDB" id="263400"/>
<dbReference type="Antibodypedia" id="25968">
    <property type="antibodies" value="92 antibodies from 20 providers"/>
</dbReference>
<dbReference type="DNASU" id="16512"/>
<dbReference type="Ensembl" id="ENSMUST00000041415.5">
    <property type="protein sequence ID" value="ENSMUSP00000040548.4"/>
    <property type="gene ID" value="ENSMUSG00000037579.8"/>
</dbReference>
<dbReference type="GeneID" id="16512"/>
<dbReference type="KEGG" id="mmu:16512"/>
<dbReference type="UCSC" id="uc011zzc.1">
    <property type="organism name" value="mouse"/>
</dbReference>
<dbReference type="AGR" id="MGI:1341723"/>
<dbReference type="CTD" id="23416"/>
<dbReference type="MGI" id="MGI:1341723">
    <property type="gene designation" value="Kcnh3"/>
</dbReference>
<dbReference type="VEuPathDB" id="HostDB:ENSMUSG00000037579"/>
<dbReference type="eggNOG" id="KOG0498">
    <property type="taxonomic scope" value="Eukaryota"/>
</dbReference>
<dbReference type="GeneTree" id="ENSGT00940000161742"/>
<dbReference type="InParanoid" id="Q9WVJ0"/>
<dbReference type="OMA" id="YIGQQEI"/>
<dbReference type="OrthoDB" id="426293at2759"/>
<dbReference type="TreeFam" id="TF313130"/>
<dbReference type="Reactome" id="R-MMU-1296072">
    <property type="pathway name" value="Voltage gated Potassium channels"/>
</dbReference>
<dbReference type="BioGRID-ORCS" id="16512">
    <property type="hits" value="1 hit in 77 CRISPR screens"/>
</dbReference>
<dbReference type="ChiTaRS" id="Kcnh3">
    <property type="organism name" value="mouse"/>
</dbReference>
<dbReference type="PRO" id="PR:Q9WVJ0"/>
<dbReference type="Proteomes" id="UP000000589">
    <property type="component" value="Chromosome 15"/>
</dbReference>
<dbReference type="RNAct" id="Q9WVJ0">
    <property type="molecule type" value="protein"/>
</dbReference>
<dbReference type="Bgee" id="ENSMUSG00000037579">
    <property type="expression patterns" value="Expressed in superior frontal gyrus and 80 other cell types or tissues"/>
</dbReference>
<dbReference type="GO" id="GO:0034702">
    <property type="term" value="C:monoatomic ion channel complex"/>
    <property type="evidence" value="ECO:0007669"/>
    <property type="project" value="UniProtKB-KW"/>
</dbReference>
<dbReference type="GO" id="GO:0005886">
    <property type="term" value="C:plasma membrane"/>
    <property type="evidence" value="ECO:0000314"/>
    <property type="project" value="UniProtKB"/>
</dbReference>
<dbReference type="GO" id="GO:0005242">
    <property type="term" value="F:inward rectifier potassium channel activity"/>
    <property type="evidence" value="ECO:0000314"/>
    <property type="project" value="UniProtKB"/>
</dbReference>
<dbReference type="GO" id="GO:0006813">
    <property type="term" value="P:potassium ion transport"/>
    <property type="evidence" value="ECO:0000314"/>
    <property type="project" value="UniProtKB"/>
</dbReference>
<dbReference type="CDD" id="cd00038">
    <property type="entry name" value="CAP_ED"/>
    <property type="match status" value="1"/>
</dbReference>
<dbReference type="CDD" id="cd00130">
    <property type="entry name" value="PAS"/>
    <property type="match status" value="1"/>
</dbReference>
<dbReference type="FunFam" id="2.60.120.10:FF:000061">
    <property type="entry name" value="Potassium voltage-gated channel subfamily H member 3"/>
    <property type="match status" value="1"/>
</dbReference>
<dbReference type="FunFam" id="3.30.450.20:FF:000001">
    <property type="entry name" value="Potassium voltage-gated channel subfamily H member 7"/>
    <property type="match status" value="1"/>
</dbReference>
<dbReference type="FunFam" id="1.10.1200.260:FF:000002">
    <property type="entry name" value="Potassium voltage-gated channel subfamily H member 8"/>
    <property type="match status" value="1"/>
</dbReference>
<dbReference type="Gene3D" id="1.10.1200.260">
    <property type="match status" value="1"/>
</dbReference>
<dbReference type="Gene3D" id="1.10.287.70">
    <property type="match status" value="1"/>
</dbReference>
<dbReference type="Gene3D" id="2.60.120.10">
    <property type="entry name" value="Jelly Rolls"/>
    <property type="match status" value="1"/>
</dbReference>
<dbReference type="Gene3D" id="3.30.450.20">
    <property type="entry name" value="PAS domain"/>
    <property type="match status" value="1"/>
</dbReference>
<dbReference type="InterPro" id="IPR000595">
    <property type="entry name" value="cNMP-bd_dom"/>
</dbReference>
<dbReference type="InterPro" id="IPR018490">
    <property type="entry name" value="cNMP-bd_dom_sf"/>
</dbReference>
<dbReference type="InterPro" id="IPR005821">
    <property type="entry name" value="Ion_trans_dom"/>
</dbReference>
<dbReference type="InterPro" id="IPR003938">
    <property type="entry name" value="K_chnl_volt-dep_EAG/ELK/ERG"/>
</dbReference>
<dbReference type="InterPro" id="IPR003950">
    <property type="entry name" value="K_chnl_volt-dep_ELK"/>
</dbReference>
<dbReference type="InterPro" id="IPR050818">
    <property type="entry name" value="KCNH_animal-type"/>
</dbReference>
<dbReference type="InterPro" id="IPR001610">
    <property type="entry name" value="PAC"/>
</dbReference>
<dbReference type="InterPro" id="IPR000014">
    <property type="entry name" value="PAS"/>
</dbReference>
<dbReference type="InterPro" id="IPR000700">
    <property type="entry name" value="PAS-assoc_C"/>
</dbReference>
<dbReference type="InterPro" id="IPR035965">
    <property type="entry name" value="PAS-like_dom_sf"/>
</dbReference>
<dbReference type="InterPro" id="IPR014710">
    <property type="entry name" value="RmlC-like_jellyroll"/>
</dbReference>
<dbReference type="NCBIfam" id="TIGR00229">
    <property type="entry name" value="sensory_box"/>
    <property type="match status" value="1"/>
</dbReference>
<dbReference type="PANTHER" id="PTHR10217:SF481">
    <property type="entry name" value="POTASSIUM VOLTAGE-GATED CHANNEL SUBFAMILY H MEMBER 3"/>
    <property type="match status" value="1"/>
</dbReference>
<dbReference type="PANTHER" id="PTHR10217">
    <property type="entry name" value="VOLTAGE AND LIGAND GATED POTASSIUM CHANNEL"/>
    <property type="match status" value="1"/>
</dbReference>
<dbReference type="Pfam" id="PF00027">
    <property type="entry name" value="cNMP_binding"/>
    <property type="match status" value="1"/>
</dbReference>
<dbReference type="Pfam" id="PF00520">
    <property type="entry name" value="Ion_trans"/>
    <property type="match status" value="1"/>
</dbReference>
<dbReference type="Pfam" id="PF13426">
    <property type="entry name" value="PAS_9"/>
    <property type="match status" value="1"/>
</dbReference>
<dbReference type="PRINTS" id="PR01463">
    <property type="entry name" value="EAGCHANLFMLY"/>
</dbReference>
<dbReference type="PRINTS" id="PR01465">
    <property type="entry name" value="ELKCHANNEL"/>
</dbReference>
<dbReference type="SMART" id="SM00100">
    <property type="entry name" value="cNMP"/>
    <property type="match status" value="1"/>
</dbReference>
<dbReference type="SMART" id="SM00086">
    <property type="entry name" value="PAC"/>
    <property type="match status" value="1"/>
</dbReference>
<dbReference type="SUPFAM" id="SSF51206">
    <property type="entry name" value="cAMP-binding domain-like"/>
    <property type="match status" value="1"/>
</dbReference>
<dbReference type="SUPFAM" id="SSF55785">
    <property type="entry name" value="PYP-like sensor domain (PAS domain)"/>
    <property type="match status" value="1"/>
</dbReference>
<dbReference type="SUPFAM" id="SSF81324">
    <property type="entry name" value="Voltage-gated potassium channels"/>
    <property type="match status" value="1"/>
</dbReference>
<dbReference type="PROSITE" id="PS50042">
    <property type="entry name" value="CNMP_BINDING_3"/>
    <property type="match status" value="1"/>
</dbReference>
<dbReference type="PROSITE" id="PS50113">
    <property type="entry name" value="PAC"/>
    <property type="match status" value="1"/>
</dbReference>
<dbReference type="PROSITE" id="PS50112">
    <property type="entry name" value="PAS"/>
    <property type="match status" value="1"/>
</dbReference>
<keyword id="KW-1003">Cell membrane</keyword>
<keyword id="KW-0325">Glycoprotein</keyword>
<keyword id="KW-0407">Ion channel</keyword>
<keyword id="KW-0406">Ion transport</keyword>
<keyword id="KW-0472">Membrane</keyword>
<keyword id="KW-0630">Potassium</keyword>
<keyword id="KW-0631">Potassium channel</keyword>
<keyword id="KW-0633">Potassium transport</keyword>
<keyword id="KW-1185">Reference proteome</keyword>
<keyword id="KW-0812">Transmembrane</keyword>
<keyword id="KW-1133">Transmembrane helix</keyword>
<keyword id="KW-0813">Transport</keyword>
<keyword id="KW-0851">Voltage-gated channel</keyword>
<proteinExistence type="evidence at protein level"/>
<sequence length="1095" mass="118244">MPAMRGLLAPQNTFLDTIATRFDGTHSNFVLGNAQVAGLFPVVYCSDGFCDLTGFSRAEVMQRGCACSFLYGPDTSELVRQQIRKALDEHKEFKAELILYRKSGLPFWCLLDVIPIKNEKGEVALFLVSHKDISETKNRGGPDNWKERGGGRRRYGRAGSKGFNANRRRSRAVLYHLSGHLQKQPKGKHKLNKGVFGEKPNLPEYKVAAIRKSPFILLHCGALRATWDGFILLATLYVAVTVPYSVCVSTAREPSAARGPPSVCDLAVEVLFILDIVLNFRTTFVSKSGQVVFAPKSICLHYVTTWFLLDVIAALPFDLLHAFKVNVYVGAHLLKTVRLLRLLRLLPRLDRYSQYSAVVLTLLMAVFALLAHWVACVWFYIGQQEIESSESELPEIGWLQELARRLETPYYLVSRSPDGGNSSGQSENCSSSSSSSGSGGGRGSEANGTGLELLGGPSLRSAYITSLYFALSSLTSVGFGNVSANTDTEKIFSICTMLIGALMHAVVFGNVTAIIQRMYARRFLYHSRTRDLRDYIRIHRIPKPLKQRMLEYFQATWAVNNGIDTTELLQSLPDELRADIAMHLHKEVLQLPLFEAASRGCLRALSLALRPAFCTPGEYLIHQGDALQALYFVCSGSMEVLKGGTVLAILGKGDLIGCELPQREQVVKANADVKGLTYCVLQCLQLAGLHESLALYPEFAPRFSRGLRGELSYNLGAGGVSAEVDTSSLSGDNTLMSTLEEKETDGEQGHTVSPAPADEPSSPLLSPGCTSSSSAAKLLSPRRTAPRPRLGGRGRPSRAGVLKPEAGPSAHPRSLDGLQLPPMPWNVPPDLSPRVVDGIEDGCSSDQPKFSFRVGQSGPECSSSPSPGTESGLLTVPLGPSEARNTDTLDKLRQAVMELSEQVLQMREGLQSLRQAVQLILVPQGEGQCPRGSGEEPCPATASGLLQPLRVDTGASSYCLQPPAGSVLSGTWPHPRPGQPPPLMAPWPWGPPASQSSPWPRATALWTSTSDSEPPGSGDLCSEPSTPASPPPSEEGARTGTPAPVSQAEATSTGEPPPGPGGRALPWDPHSLEMVLIGCHGPGTVQWTQEEGTGV</sequence>
<protein>
    <recommendedName>
        <fullName evidence="11">Voltage-gated inwardly rectifying potassium channel KCNH3</fullName>
    </recommendedName>
    <alternativeName>
        <fullName>Ether-a-go-go-like potassium channel 2</fullName>
        <shortName>ELK channel 2</shortName>
        <shortName evidence="9">mElk2</shortName>
    </alternativeName>
    <alternativeName>
        <fullName>Potassium voltage-gated channel subfamily H member 3</fullName>
    </alternativeName>
    <alternativeName>
        <fullName>Voltage-gated potassium channel subunit Kv12.2</fullName>
    </alternativeName>
</protein>